<accession>Q0TLS2</accession>
<protein>
    <recommendedName>
        <fullName evidence="1">Thiamine import ATP-binding protein ThiQ</fullName>
        <ecNumber evidence="1">7.6.2.15</ecNumber>
    </recommendedName>
</protein>
<sequence length="232" mass="25102">MLKLTDITWLYHHLPMRFSLTVERGEQVAILGPSGAGKSTLLNLIAGFLTPASGLLTIDDVDHTTTPPSRRPVSMLFQENNLFSHLTVAQNIGLGLNPGLKLNAAQQKKMHAIAHQMGIDNLMARLPGELSGGQRQRVALARCLVREQPILLLDEPFSALDPALRQEMLTLVSTSCQQQKMTLLMVSHSVEDAARIATRSVVVADGRIAWQGKTDELLSGKASASALLGIKG</sequence>
<evidence type="ECO:0000255" key="1">
    <source>
        <dbReference type="HAMAP-Rule" id="MF_01723"/>
    </source>
</evidence>
<dbReference type="EC" id="7.6.2.15" evidence="1"/>
<dbReference type="EMBL" id="CP000247">
    <property type="protein sequence ID" value="ABG68109.1"/>
    <property type="molecule type" value="Genomic_DNA"/>
</dbReference>
<dbReference type="RefSeq" id="WP_000916270.1">
    <property type="nucleotide sequence ID" value="NC_008253.1"/>
</dbReference>
<dbReference type="SMR" id="Q0TLS2"/>
<dbReference type="KEGG" id="ecp:ECP_0069"/>
<dbReference type="HOGENOM" id="CLU_000604_1_22_6"/>
<dbReference type="Proteomes" id="UP000009182">
    <property type="component" value="Chromosome"/>
</dbReference>
<dbReference type="GO" id="GO:0005886">
    <property type="term" value="C:plasma membrane"/>
    <property type="evidence" value="ECO:0007669"/>
    <property type="project" value="UniProtKB-SubCell"/>
</dbReference>
<dbReference type="GO" id="GO:0048502">
    <property type="term" value="F:ABC-type thiamine transporter activity"/>
    <property type="evidence" value="ECO:0007669"/>
    <property type="project" value="UniProtKB-EC"/>
</dbReference>
<dbReference type="GO" id="GO:0005524">
    <property type="term" value="F:ATP binding"/>
    <property type="evidence" value="ECO:0007669"/>
    <property type="project" value="UniProtKB-KW"/>
</dbReference>
<dbReference type="GO" id="GO:0016887">
    <property type="term" value="F:ATP hydrolysis activity"/>
    <property type="evidence" value="ECO:0007669"/>
    <property type="project" value="InterPro"/>
</dbReference>
<dbReference type="CDD" id="cd03298">
    <property type="entry name" value="ABC_ThiQ_thiamine_transporter"/>
    <property type="match status" value="1"/>
</dbReference>
<dbReference type="FunFam" id="3.40.50.300:FF:001071">
    <property type="entry name" value="Thiamine import ATP-binding protein ThiQ"/>
    <property type="match status" value="1"/>
</dbReference>
<dbReference type="Gene3D" id="3.40.50.300">
    <property type="entry name" value="P-loop containing nucleotide triphosphate hydrolases"/>
    <property type="match status" value="1"/>
</dbReference>
<dbReference type="InterPro" id="IPR003593">
    <property type="entry name" value="AAA+_ATPase"/>
</dbReference>
<dbReference type="InterPro" id="IPR050093">
    <property type="entry name" value="ABC_SmlMolc_Importer"/>
</dbReference>
<dbReference type="InterPro" id="IPR003439">
    <property type="entry name" value="ABC_transporter-like_ATP-bd"/>
</dbReference>
<dbReference type="InterPro" id="IPR017871">
    <property type="entry name" value="ABC_transporter-like_CS"/>
</dbReference>
<dbReference type="InterPro" id="IPR027417">
    <property type="entry name" value="P-loop_NTPase"/>
</dbReference>
<dbReference type="InterPro" id="IPR005968">
    <property type="entry name" value="Thiamine_ABC_ThiQ"/>
</dbReference>
<dbReference type="NCBIfam" id="NF008039">
    <property type="entry name" value="PRK10771.1"/>
    <property type="match status" value="1"/>
</dbReference>
<dbReference type="NCBIfam" id="TIGR01277">
    <property type="entry name" value="thiQ"/>
    <property type="match status" value="1"/>
</dbReference>
<dbReference type="PANTHER" id="PTHR42781">
    <property type="entry name" value="SPERMIDINE/PUTRESCINE IMPORT ATP-BINDING PROTEIN POTA"/>
    <property type="match status" value="1"/>
</dbReference>
<dbReference type="PANTHER" id="PTHR42781:SF1">
    <property type="entry name" value="THIAMINE IMPORT ATP-BINDING PROTEIN THIQ"/>
    <property type="match status" value="1"/>
</dbReference>
<dbReference type="Pfam" id="PF00005">
    <property type="entry name" value="ABC_tran"/>
    <property type="match status" value="1"/>
</dbReference>
<dbReference type="SMART" id="SM00382">
    <property type="entry name" value="AAA"/>
    <property type="match status" value="1"/>
</dbReference>
<dbReference type="SUPFAM" id="SSF52540">
    <property type="entry name" value="P-loop containing nucleoside triphosphate hydrolases"/>
    <property type="match status" value="1"/>
</dbReference>
<dbReference type="PROSITE" id="PS00211">
    <property type="entry name" value="ABC_TRANSPORTER_1"/>
    <property type="match status" value="1"/>
</dbReference>
<dbReference type="PROSITE" id="PS50893">
    <property type="entry name" value="ABC_TRANSPORTER_2"/>
    <property type="match status" value="1"/>
</dbReference>
<dbReference type="PROSITE" id="PS51288">
    <property type="entry name" value="THIQ"/>
    <property type="match status" value="1"/>
</dbReference>
<comment type="function">
    <text evidence="1">Part of the ABC transporter complex ThiBPQ involved in thiamine import. Responsible for energy coupling to the transport system.</text>
</comment>
<comment type="catalytic activity">
    <reaction evidence="1">
        <text>thiamine(out) + ATP + H2O = thiamine(in) + ADP + phosphate + H(+)</text>
        <dbReference type="Rhea" id="RHEA:29811"/>
        <dbReference type="ChEBI" id="CHEBI:15377"/>
        <dbReference type="ChEBI" id="CHEBI:15378"/>
        <dbReference type="ChEBI" id="CHEBI:18385"/>
        <dbReference type="ChEBI" id="CHEBI:30616"/>
        <dbReference type="ChEBI" id="CHEBI:43474"/>
        <dbReference type="ChEBI" id="CHEBI:456216"/>
        <dbReference type="EC" id="7.6.2.15"/>
    </reaction>
</comment>
<comment type="subunit">
    <text evidence="1">The complex is composed of two ATP-binding proteins (ThiQ), two transmembrane proteins (ThiP) and a solute-binding protein (ThiB).</text>
</comment>
<comment type="subcellular location">
    <subcellularLocation>
        <location evidence="1">Cell inner membrane</location>
        <topology evidence="1">Peripheral membrane protein</topology>
    </subcellularLocation>
</comment>
<comment type="similarity">
    <text evidence="1">Belongs to the ABC transporter superfamily. Thiamine importer (TC 3.A.1.19.1) family.</text>
</comment>
<gene>
    <name evidence="1" type="primary">thiQ</name>
    <name type="ordered locus">ECP_0069</name>
</gene>
<keyword id="KW-0067">ATP-binding</keyword>
<keyword id="KW-0997">Cell inner membrane</keyword>
<keyword id="KW-1003">Cell membrane</keyword>
<keyword id="KW-0472">Membrane</keyword>
<keyword id="KW-0547">Nucleotide-binding</keyword>
<keyword id="KW-1278">Translocase</keyword>
<keyword id="KW-0813">Transport</keyword>
<reference key="1">
    <citation type="journal article" date="2006" name="Mol. Microbiol.">
        <title>Role of pathogenicity island-associated integrases in the genome plasticity of uropathogenic Escherichia coli strain 536.</title>
        <authorList>
            <person name="Hochhut B."/>
            <person name="Wilde C."/>
            <person name="Balling G."/>
            <person name="Middendorf B."/>
            <person name="Dobrindt U."/>
            <person name="Brzuszkiewicz E."/>
            <person name="Gottschalk G."/>
            <person name="Carniel E."/>
            <person name="Hacker J."/>
        </authorList>
    </citation>
    <scope>NUCLEOTIDE SEQUENCE [LARGE SCALE GENOMIC DNA]</scope>
    <source>
        <strain>536 / UPEC</strain>
    </source>
</reference>
<feature type="chain" id="PRO_0000274441" description="Thiamine import ATP-binding protein ThiQ">
    <location>
        <begin position="1"/>
        <end position="232"/>
    </location>
</feature>
<feature type="domain" description="ABC transporter" evidence="1">
    <location>
        <begin position="2"/>
        <end position="230"/>
    </location>
</feature>
<feature type="binding site" evidence="1">
    <location>
        <begin position="32"/>
        <end position="39"/>
    </location>
    <ligand>
        <name>ATP</name>
        <dbReference type="ChEBI" id="CHEBI:30616"/>
    </ligand>
</feature>
<organism>
    <name type="scientific">Escherichia coli O6:K15:H31 (strain 536 / UPEC)</name>
    <dbReference type="NCBI Taxonomy" id="362663"/>
    <lineage>
        <taxon>Bacteria</taxon>
        <taxon>Pseudomonadati</taxon>
        <taxon>Pseudomonadota</taxon>
        <taxon>Gammaproteobacteria</taxon>
        <taxon>Enterobacterales</taxon>
        <taxon>Enterobacteriaceae</taxon>
        <taxon>Escherichia</taxon>
    </lineage>
</organism>
<proteinExistence type="inferred from homology"/>
<name>THIQ_ECOL5</name>